<protein>
    <recommendedName>
        <fullName evidence="1">Large ribosomal subunit protein bL35</fullName>
    </recommendedName>
    <alternativeName>
        <fullName evidence="3">50S ribosomal protein L35</fullName>
    </alternativeName>
</protein>
<accession>Q2YBS4</accession>
<sequence>MPKMKTKSGAAKRFTVRAGGTVKRSQAFKRHILTKKTTKSKRQLRGSVNVHFSDVASVRAMMPYA</sequence>
<organism>
    <name type="scientific">Nitrosospira multiformis (strain ATCC 25196 / NCIMB 11849 / C 71)</name>
    <dbReference type="NCBI Taxonomy" id="323848"/>
    <lineage>
        <taxon>Bacteria</taxon>
        <taxon>Pseudomonadati</taxon>
        <taxon>Pseudomonadota</taxon>
        <taxon>Betaproteobacteria</taxon>
        <taxon>Nitrosomonadales</taxon>
        <taxon>Nitrosomonadaceae</taxon>
        <taxon>Nitrosospira</taxon>
    </lineage>
</organism>
<comment type="similarity">
    <text evidence="1">Belongs to the bacterial ribosomal protein bL35 family.</text>
</comment>
<evidence type="ECO:0000255" key="1">
    <source>
        <dbReference type="HAMAP-Rule" id="MF_00514"/>
    </source>
</evidence>
<evidence type="ECO:0000256" key="2">
    <source>
        <dbReference type="SAM" id="MobiDB-lite"/>
    </source>
</evidence>
<evidence type="ECO:0000305" key="3"/>
<proteinExistence type="inferred from homology"/>
<keyword id="KW-1185">Reference proteome</keyword>
<keyword id="KW-0687">Ribonucleoprotein</keyword>
<keyword id="KW-0689">Ribosomal protein</keyword>
<name>RL35_NITMU</name>
<feature type="chain" id="PRO_0000258716" description="Large ribosomal subunit protein bL35">
    <location>
        <begin position="1"/>
        <end position="65"/>
    </location>
</feature>
<feature type="region of interest" description="Disordered" evidence="2">
    <location>
        <begin position="1"/>
        <end position="21"/>
    </location>
</feature>
<dbReference type="EMBL" id="CP000103">
    <property type="protein sequence ID" value="ABB73797.1"/>
    <property type="molecule type" value="Genomic_DNA"/>
</dbReference>
<dbReference type="RefSeq" id="WP_011379851.1">
    <property type="nucleotide sequence ID" value="NC_007614.1"/>
</dbReference>
<dbReference type="SMR" id="Q2YBS4"/>
<dbReference type="STRING" id="323848.Nmul_A0489"/>
<dbReference type="KEGG" id="nmu:Nmul_A0489"/>
<dbReference type="eggNOG" id="COG0291">
    <property type="taxonomic scope" value="Bacteria"/>
</dbReference>
<dbReference type="HOGENOM" id="CLU_169643_1_0_4"/>
<dbReference type="OrthoDB" id="47476at2"/>
<dbReference type="Proteomes" id="UP000002718">
    <property type="component" value="Chromosome"/>
</dbReference>
<dbReference type="GO" id="GO:0022625">
    <property type="term" value="C:cytosolic large ribosomal subunit"/>
    <property type="evidence" value="ECO:0007669"/>
    <property type="project" value="TreeGrafter"/>
</dbReference>
<dbReference type="GO" id="GO:0003735">
    <property type="term" value="F:structural constituent of ribosome"/>
    <property type="evidence" value="ECO:0007669"/>
    <property type="project" value="InterPro"/>
</dbReference>
<dbReference type="GO" id="GO:0006412">
    <property type="term" value="P:translation"/>
    <property type="evidence" value="ECO:0007669"/>
    <property type="project" value="UniProtKB-UniRule"/>
</dbReference>
<dbReference type="FunFam" id="4.10.410.60:FF:000001">
    <property type="entry name" value="50S ribosomal protein L35"/>
    <property type="match status" value="1"/>
</dbReference>
<dbReference type="Gene3D" id="4.10.410.60">
    <property type="match status" value="1"/>
</dbReference>
<dbReference type="HAMAP" id="MF_00514">
    <property type="entry name" value="Ribosomal_bL35"/>
    <property type="match status" value="1"/>
</dbReference>
<dbReference type="InterPro" id="IPR001706">
    <property type="entry name" value="Ribosomal_bL35"/>
</dbReference>
<dbReference type="InterPro" id="IPR021137">
    <property type="entry name" value="Ribosomal_bL35-like"/>
</dbReference>
<dbReference type="InterPro" id="IPR018265">
    <property type="entry name" value="Ribosomal_bL35_CS"/>
</dbReference>
<dbReference type="InterPro" id="IPR037229">
    <property type="entry name" value="Ribosomal_bL35_sf"/>
</dbReference>
<dbReference type="NCBIfam" id="TIGR00001">
    <property type="entry name" value="rpmI_bact"/>
    <property type="match status" value="1"/>
</dbReference>
<dbReference type="PANTHER" id="PTHR33343">
    <property type="entry name" value="54S RIBOSOMAL PROTEIN BL35M"/>
    <property type="match status" value="1"/>
</dbReference>
<dbReference type="PANTHER" id="PTHR33343:SF1">
    <property type="entry name" value="LARGE RIBOSOMAL SUBUNIT PROTEIN BL35M"/>
    <property type="match status" value="1"/>
</dbReference>
<dbReference type="Pfam" id="PF01632">
    <property type="entry name" value="Ribosomal_L35p"/>
    <property type="match status" value="1"/>
</dbReference>
<dbReference type="PRINTS" id="PR00064">
    <property type="entry name" value="RIBOSOMALL35"/>
</dbReference>
<dbReference type="SUPFAM" id="SSF143034">
    <property type="entry name" value="L35p-like"/>
    <property type="match status" value="1"/>
</dbReference>
<dbReference type="PROSITE" id="PS00936">
    <property type="entry name" value="RIBOSOMAL_L35"/>
    <property type="match status" value="1"/>
</dbReference>
<reference key="1">
    <citation type="submission" date="2005-08" db="EMBL/GenBank/DDBJ databases">
        <title>Complete sequence of chromosome 1 of Nitrosospira multiformis ATCC 25196.</title>
        <authorList>
            <person name="Copeland A."/>
            <person name="Lucas S."/>
            <person name="Lapidus A."/>
            <person name="Barry K."/>
            <person name="Detter J.C."/>
            <person name="Glavina T."/>
            <person name="Hammon N."/>
            <person name="Israni S."/>
            <person name="Pitluck S."/>
            <person name="Chain P."/>
            <person name="Malfatti S."/>
            <person name="Shin M."/>
            <person name="Vergez L."/>
            <person name="Schmutz J."/>
            <person name="Larimer F."/>
            <person name="Land M."/>
            <person name="Hauser L."/>
            <person name="Kyrpides N."/>
            <person name="Lykidis A."/>
            <person name="Richardson P."/>
        </authorList>
    </citation>
    <scope>NUCLEOTIDE SEQUENCE [LARGE SCALE GENOMIC DNA]</scope>
    <source>
        <strain>ATCC 25196 / NCIMB 11849 / C 71</strain>
    </source>
</reference>
<gene>
    <name evidence="1" type="primary">rpmI</name>
    <name type="ordered locus">Nmul_A0489</name>
</gene>